<name>ASTC_ECO81</name>
<accession>B7MVM7</accession>
<feature type="chain" id="PRO_1000164379" description="Succinylornithine transaminase">
    <location>
        <begin position="1"/>
        <end position="406"/>
    </location>
</feature>
<feature type="modified residue" description="N6-(pyridoxal phosphate)lysine" evidence="1">
    <location>
        <position position="252"/>
    </location>
</feature>
<dbReference type="EC" id="2.6.1.81" evidence="1"/>
<dbReference type="EMBL" id="CU928162">
    <property type="protein sequence ID" value="CAR08143.2"/>
    <property type="molecule type" value="Genomic_DNA"/>
</dbReference>
<dbReference type="RefSeq" id="WP_000081990.1">
    <property type="nucleotide sequence ID" value="NC_011745.1"/>
</dbReference>
<dbReference type="SMR" id="B7MVM7"/>
<dbReference type="KEGG" id="ecq:ECED1_1950"/>
<dbReference type="HOGENOM" id="CLU_016922_10_1_6"/>
<dbReference type="UniPathway" id="UPA00185">
    <property type="reaction ID" value="UER00281"/>
</dbReference>
<dbReference type="Proteomes" id="UP000000748">
    <property type="component" value="Chromosome"/>
</dbReference>
<dbReference type="GO" id="GO:0042802">
    <property type="term" value="F:identical protein binding"/>
    <property type="evidence" value="ECO:0007669"/>
    <property type="project" value="TreeGrafter"/>
</dbReference>
<dbReference type="GO" id="GO:0030170">
    <property type="term" value="F:pyridoxal phosphate binding"/>
    <property type="evidence" value="ECO:0007669"/>
    <property type="project" value="UniProtKB-UniRule"/>
</dbReference>
<dbReference type="GO" id="GO:0043825">
    <property type="term" value="F:succinylornithine transaminase activity"/>
    <property type="evidence" value="ECO:0007669"/>
    <property type="project" value="UniProtKB-EC"/>
</dbReference>
<dbReference type="GO" id="GO:1901607">
    <property type="term" value="P:alpha-amino acid biosynthetic process"/>
    <property type="evidence" value="ECO:0007669"/>
    <property type="project" value="UniProtKB-ARBA"/>
</dbReference>
<dbReference type="GO" id="GO:0019544">
    <property type="term" value="P:arginine catabolic process to glutamate"/>
    <property type="evidence" value="ECO:0007669"/>
    <property type="project" value="UniProtKB-UniRule"/>
</dbReference>
<dbReference type="GO" id="GO:0019545">
    <property type="term" value="P:arginine catabolic process to succinate"/>
    <property type="evidence" value="ECO:0007669"/>
    <property type="project" value="UniProtKB-UniRule"/>
</dbReference>
<dbReference type="GO" id="GO:0006593">
    <property type="term" value="P:ornithine catabolic process"/>
    <property type="evidence" value="ECO:0007669"/>
    <property type="project" value="InterPro"/>
</dbReference>
<dbReference type="CDD" id="cd00610">
    <property type="entry name" value="OAT_like"/>
    <property type="match status" value="1"/>
</dbReference>
<dbReference type="FunFam" id="3.40.640.10:FF:000004">
    <property type="entry name" value="Acetylornithine aminotransferase"/>
    <property type="match status" value="1"/>
</dbReference>
<dbReference type="FunFam" id="3.90.1150.10:FF:000009">
    <property type="entry name" value="Succinylornithine transaminase"/>
    <property type="match status" value="1"/>
</dbReference>
<dbReference type="Gene3D" id="3.90.1150.10">
    <property type="entry name" value="Aspartate Aminotransferase, domain 1"/>
    <property type="match status" value="1"/>
</dbReference>
<dbReference type="Gene3D" id="3.40.640.10">
    <property type="entry name" value="Type I PLP-dependent aspartate aminotransferase-like (Major domain)"/>
    <property type="match status" value="1"/>
</dbReference>
<dbReference type="HAMAP" id="MF_01107">
    <property type="entry name" value="ArgD_aminotrans_3"/>
    <property type="match status" value="1"/>
</dbReference>
<dbReference type="HAMAP" id="MF_01173">
    <property type="entry name" value="AstC_aminotrans_3"/>
    <property type="match status" value="1"/>
</dbReference>
<dbReference type="InterPro" id="IPR017652">
    <property type="entry name" value="Ac/SucOrn_transaminase_bac"/>
</dbReference>
<dbReference type="InterPro" id="IPR004636">
    <property type="entry name" value="AcOrn/SuccOrn_fam"/>
</dbReference>
<dbReference type="InterPro" id="IPR005814">
    <property type="entry name" value="Aminotrans_3"/>
</dbReference>
<dbReference type="InterPro" id="IPR049704">
    <property type="entry name" value="Aminotrans_3_PPA_site"/>
</dbReference>
<dbReference type="InterPro" id="IPR050103">
    <property type="entry name" value="Class-III_PLP-dep_AT"/>
</dbReference>
<dbReference type="InterPro" id="IPR015424">
    <property type="entry name" value="PyrdxlP-dep_Trfase"/>
</dbReference>
<dbReference type="InterPro" id="IPR015421">
    <property type="entry name" value="PyrdxlP-dep_Trfase_major"/>
</dbReference>
<dbReference type="InterPro" id="IPR015422">
    <property type="entry name" value="PyrdxlP-dep_Trfase_small"/>
</dbReference>
<dbReference type="InterPro" id="IPR026330">
    <property type="entry name" value="SOAT"/>
</dbReference>
<dbReference type="NCBIfam" id="TIGR03246">
    <property type="entry name" value="arg_catab_astC"/>
    <property type="match status" value="1"/>
</dbReference>
<dbReference type="NCBIfam" id="TIGR00707">
    <property type="entry name" value="argD"/>
    <property type="match status" value="1"/>
</dbReference>
<dbReference type="NCBIfam" id="NF002325">
    <property type="entry name" value="PRK01278.1"/>
    <property type="match status" value="1"/>
</dbReference>
<dbReference type="NCBIfam" id="NF003468">
    <property type="entry name" value="PRK05093.1"/>
    <property type="match status" value="1"/>
</dbReference>
<dbReference type="NCBIfam" id="NF009047">
    <property type="entry name" value="PRK12381.1"/>
    <property type="match status" value="1"/>
</dbReference>
<dbReference type="PANTHER" id="PTHR11986">
    <property type="entry name" value="AMINOTRANSFERASE CLASS III"/>
    <property type="match status" value="1"/>
</dbReference>
<dbReference type="PANTHER" id="PTHR11986:SF113">
    <property type="entry name" value="SUCCINYLORNITHINE TRANSAMINASE"/>
    <property type="match status" value="1"/>
</dbReference>
<dbReference type="Pfam" id="PF00202">
    <property type="entry name" value="Aminotran_3"/>
    <property type="match status" value="1"/>
</dbReference>
<dbReference type="PIRSF" id="PIRSF000521">
    <property type="entry name" value="Transaminase_4ab_Lys_Orn"/>
    <property type="match status" value="1"/>
</dbReference>
<dbReference type="SUPFAM" id="SSF53383">
    <property type="entry name" value="PLP-dependent transferases"/>
    <property type="match status" value="1"/>
</dbReference>
<dbReference type="PROSITE" id="PS00600">
    <property type="entry name" value="AA_TRANSFER_CLASS_3"/>
    <property type="match status" value="1"/>
</dbReference>
<proteinExistence type="inferred from homology"/>
<reference key="1">
    <citation type="journal article" date="2009" name="PLoS Genet.">
        <title>Organised genome dynamics in the Escherichia coli species results in highly diverse adaptive paths.</title>
        <authorList>
            <person name="Touchon M."/>
            <person name="Hoede C."/>
            <person name="Tenaillon O."/>
            <person name="Barbe V."/>
            <person name="Baeriswyl S."/>
            <person name="Bidet P."/>
            <person name="Bingen E."/>
            <person name="Bonacorsi S."/>
            <person name="Bouchier C."/>
            <person name="Bouvet O."/>
            <person name="Calteau A."/>
            <person name="Chiapello H."/>
            <person name="Clermont O."/>
            <person name="Cruveiller S."/>
            <person name="Danchin A."/>
            <person name="Diard M."/>
            <person name="Dossat C."/>
            <person name="Karoui M.E."/>
            <person name="Frapy E."/>
            <person name="Garry L."/>
            <person name="Ghigo J.M."/>
            <person name="Gilles A.M."/>
            <person name="Johnson J."/>
            <person name="Le Bouguenec C."/>
            <person name="Lescat M."/>
            <person name="Mangenot S."/>
            <person name="Martinez-Jehanne V."/>
            <person name="Matic I."/>
            <person name="Nassif X."/>
            <person name="Oztas S."/>
            <person name="Petit M.A."/>
            <person name="Pichon C."/>
            <person name="Rouy Z."/>
            <person name="Ruf C.S."/>
            <person name="Schneider D."/>
            <person name="Tourret J."/>
            <person name="Vacherie B."/>
            <person name="Vallenet D."/>
            <person name="Medigue C."/>
            <person name="Rocha E.P.C."/>
            <person name="Denamur E."/>
        </authorList>
    </citation>
    <scope>NUCLEOTIDE SEQUENCE [LARGE SCALE GENOMIC DNA]</scope>
    <source>
        <strain>ED1a</strain>
    </source>
</reference>
<evidence type="ECO:0000255" key="1">
    <source>
        <dbReference type="HAMAP-Rule" id="MF_01173"/>
    </source>
</evidence>
<keyword id="KW-0032">Aminotransferase</keyword>
<keyword id="KW-0056">Arginine metabolism</keyword>
<keyword id="KW-0663">Pyridoxal phosphate</keyword>
<keyword id="KW-0808">Transferase</keyword>
<gene>
    <name evidence="1" type="primary">astC</name>
    <name evidence="1" type="synonym">argM</name>
    <name type="ordered locus">ECED1_1950</name>
</gene>
<sequence>MSQPITRENFDEWMIPVYAPAPFIPVRGEGSRLWDQQGKEYIDFAGGIAVNALGHAHPELREALNEQASKFWHTGNGYTNEPVLRLAKKLIDATFADRVFFCNSGAEANEAALKLARKFAHDRYGSHKSGIVAFKNAFHGRTLFTVSAGGQPAYSQDFAPLPPDIRHAAYNDINSASALIDDATCAVIVEPIQGEGGVVPASNAFLQGLRELCDRHNALLIFDEVQTGVGRTGELYACMHYGVTPDLLTTAKALGGGFPVGALLATEECASVMTVGTHGTTYGGNPLASAVAGKVLDLINTPEMLNGVKQRHDWFVERLNSINHHYSLFSEVRGLGLLIGCVLNADYAGQAKQISQEAVKAGVMVLIAGGNVVRFAPALNVSEEEVTTGLDRFAAACEHFVSRGSS</sequence>
<protein>
    <recommendedName>
        <fullName evidence="1">Succinylornithine transaminase</fullName>
        <ecNumber evidence="1">2.6.1.81</ecNumber>
    </recommendedName>
    <alternativeName>
        <fullName evidence="1">Succinylornithine aminotransferase</fullName>
    </alternativeName>
</protein>
<comment type="function">
    <text evidence="1">Catalyzes the transamination of N(2)-succinylornithine and alpha-ketoglutarate into N(2)-succinylglutamate semialdehyde and glutamate. Can also act as an acetylornithine aminotransferase.</text>
</comment>
<comment type="catalytic activity">
    <reaction evidence="1">
        <text>N(2)-succinyl-L-ornithine + 2-oxoglutarate = N-succinyl-L-glutamate 5-semialdehyde + L-glutamate</text>
        <dbReference type="Rhea" id="RHEA:16953"/>
        <dbReference type="ChEBI" id="CHEBI:16810"/>
        <dbReference type="ChEBI" id="CHEBI:29985"/>
        <dbReference type="ChEBI" id="CHEBI:58514"/>
        <dbReference type="ChEBI" id="CHEBI:58520"/>
        <dbReference type="EC" id="2.6.1.81"/>
    </reaction>
</comment>
<comment type="cofactor">
    <cofactor evidence="1">
        <name>pyridoxal 5'-phosphate</name>
        <dbReference type="ChEBI" id="CHEBI:597326"/>
    </cofactor>
</comment>
<comment type="pathway">
    <text evidence="1">Amino-acid degradation; L-arginine degradation via AST pathway; L-glutamate and succinate from L-arginine: step 3/5.</text>
</comment>
<comment type="similarity">
    <text evidence="1">Belongs to the class-III pyridoxal-phosphate-dependent aminotransferase family. AstC subfamily.</text>
</comment>
<organism>
    <name type="scientific">Escherichia coli O81 (strain ED1a)</name>
    <dbReference type="NCBI Taxonomy" id="585397"/>
    <lineage>
        <taxon>Bacteria</taxon>
        <taxon>Pseudomonadati</taxon>
        <taxon>Pseudomonadota</taxon>
        <taxon>Gammaproteobacteria</taxon>
        <taxon>Enterobacterales</taxon>
        <taxon>Enterobacteriaceae</taxon>
        <taxon>Escherichia</taxon>
    </lineage>
</organism>